<accession>Q0AJ18</accession>
<comment type="cofactor">
    <cofactor evidence="1">
        <name>Fe(2+)</name>
        <dbReference type="ChEBI" id="CHEBI:29033"/>
    </cofactor>
    <text evidence="1">Binds 1 Fe(2+) ion per subunit.</text>
</comment>
<comment type="cofactor">
    <cofactor evidence="1">
        <name>L-ascorbate</name>
        <dbReference type="ChEBI" id="CHEBI:38290"/>
    </cofactor>
</comment>
<keyword id="KW-0223">Dioxygenase</keyword>
<keyword id="KW-0408">Iron</keyword>
<keyword id="KW-0479">Metal-binding</keyword>
<keyword id="KW-0560">Oxidoreductase</keyword>
<keyword id="KW-0847">Vitamin C</keyword>
<gene>
    <name type="ordered locus">Neut_0373</name>
</gene>
<evidence type="ECO:0000255" key="1">
    <source>
        <dbReference type="HAMAP-Rule" id="MF_00657"/>
    </source>
</evidence>
<proteinExistence type="inferred from homology"/>
<reference key="1">
    <citation type="journal article" date="2007" name="Environ. Microbiol.">
        <title>Whole-genome analysis of the ammonia-oxidizing bacterium, Nitrosomonas eutropha C91: implications for niche adaptation.</title>
        <authorList>
            <person name="Stein L.Y."/>
            <person name="Arp D.J."/>
            <person name="Berube P.M."/>
            <person name="Chain P.S."/>
            <person name="Hauser L."/>
            <person name="Jetten M.S."/>
            <person name="Klotz M.G."/>
            <person name="Larimer F.W."/>
            <person name="Norton J.M."/>
            <person name="Op den Camp H.J.M."/>
            <person name="Shin M."/>
            <person name="Wei X."/>
        </authorList>
    </citation>
    <scope>NUCLEOTIDE SEQUENCE [LARGE SCALE GENOMIC DNA]</scope>
    <source>
        <strain>DSM 101675 / C91 / Nm57</strain>
    </source>
</reference>
<protein>
    <recommendedName>
        <fullName evidence="1">PKHD-type hydroxylase Neut_0373</fullName>
        <ecNumber evidence="1">1.14.11.-</ecNumber>
    </recommendedName>
</protein>
<name>Y373_NITEC</name>
<sequence length="227" mass="25010">MLLTIDNVLTEEELAAASSLLAESAWVSGLVTAGAQAAKVKNNQQLPEDSPQMAALRGLVLGALNRNALFFTATLPKKIMPPFFNRYSGKTNHYGFHVDNAMRMLPDGVGYVRADVSATLFLSNPQTYDGGELVINDTFGQQSVKLQAGSMVIYPSSSVHQVTPVTHGERIACFMFIQSMVRDPNQRRLLYEMDMALLQLRQNIGETEAVVSLTGTYHNLLRQWAES</sequence>
<dbReference type="EC" id="1.14.11.-" evidence="1"/>
<dbReference type="EMBL" id="CP000450">
    <property type="protein sequence ID" value="ABI58653.1"/>
    <property type="molecule type" value="Genomic_DNA"/>
</dbReference>
<dbReference type="RefSeq" id="WP_011633496.1">
    <property type="nucleotide sequence ID" value="NC_008344.1"/>
</dbReference>
<dbReference type="SMR" id="Q0AJ18"/>
<dbReference type="STRING" id="335283.Neut_0373"/>
<dbReference type="KEGG" id="net:Neut_0373"/>
<dbReference type="eggNOG" id="COG3128">
    <property type="taxonomic scope" value="Bacteria"/>
</dbReference>
<dbReference type="HOGENOM" id="CLU_106663_0_0_4"/>
<dbReference type="OrthoDB" id="9812472at2"/>
<dbReference type="Proteomes" id="UP000001966">
    <property type="component" value="Chromosome"/>
</dbReference>
<dbReference type="GO" id="GO:0016706">
    <property type="term" value="F:2-oxoglutarate-dependent dioxygenase activity"/>
    <property type="evidence" value="ECO:0007669"/>
    <property type="project" value="UniProtKB-UniRule"/>
</dbReference>
<dbReference type="GO" id="GO:0005506">
    <property type="term" value="F:iron ion binding"/>
    <property type="evidence" value="ECO:0007669"/>
    <property type="project" value="UniProtKB-UniRule"/>
</dbReference>
<dbReference type="GO" id="GO:0031418">
    <property type="term" value="F:L-ascorbic acid binding"/>
    <property type="evidence" value="ECO:0007669"/>
    <property type="project" value="UniProtKB-KW"/>
</dbReference>
<dbReference type="GO" id="GO:0006974">
    <property type="term" value="P:DNA damage response"/>
    <property type="evidence" value="ECO:0007669"/>
    <property type="project" value="TreeGrafter"/>
</dbReference>
<dbReference type="GO" id="GO:0006879">
    <property type="term" value="P:intracellular iron ion homeostasis"/>
    <property type="evidence" value="ECO:0007669"/>
    <property type="project" value="TreeGrafter"/>
</dbReference>
<dbReference type="Gene3D" id="2.60.120.620">
    <property type="entry name" value="q2cbj1_9rhob like domain"/>
    <property type="match status" value="1"/>
</dbReference>
<dbReference type="Gene3D" id="4.10.860.20">
    <property type="entry name" value="Rabenosyn, Rab binding domain"/>
    <property type="match status" value="1"/>
</dbReference>
<dbReference type="HAMAP" id="MF_00657">
    <property type="entry name" value="Hydroxyl_YbiX"/>
    <property type="match status" value="1"/>
</dbReference>
<dbReference type="InterPro" id="IPR005123">
    <property type="entry name" value="Oxoglu/Fe-dep_dioxygenase_dom"/>
</dbReference>
<dbReference type="InterPro" id="IPR041097">
    <property type="entry name" value="PKHD_C"/>
</dbReference>
<dbReference type="InterPro" id="IPR023550">
    <property type="entry name" value="PKHD_hydroxylase"/>
</dbReference>
<dbReference type="InterPro" id="IPR006620">
    <property type="entry name" value="Pro_4_hyd_alph"/>
</dbReference>
<dbReference type="InterPro" id="IPR044862">
    <property type="entry name" value="Pro_4_hyd_alph_FE2OG_OXY"/>
</dbReference>
<dbReference type="NCBIfam" id="NF003974">
    <property type="entry name" value="PRK05467.1-3"/>
    <property type="match status" value="1"/>
</dbReference>
<dbReference type="NCBIfam" id="NF003975">
    <property type="entry name" value="PRK05467.1-4"/>
    <property type="match status" value="1"/>
</dbReference>
<dbReference type="PANTHER" id="PTHR41536">
    <property type="entry name" value="PKHD-TYPE HYDROXYLASE YBIX"/>
    <property type="match status" value="1"/>
</dbReference>
<dbReference type="PANTHER" id="PTHR41536:SF1">
    <property type="entry name" value="PKHD-TYPE HYDROXYLASE YBIX"/>
    <property type="match status" value="1"/>
</dbReference>
<dbReference type="Pfam" id="PF13640">
    <property type="entry name" value="2OG-FeII_Oxy_3"/>
    <property type="match status" value="1"/>
</dbReference>
<dbReference type="Pfam" id="PF18331">
    <property type="entry name" value="PKHD_C"/>
    <property type="match status" value="1"/>
</dbReference>
<dbReference type="SMART" id="SM00702">
    <property type="entry name" value="P4Hc"/>
    <property type="match status" value="1"/>
</dbReference>
<dbReference type="PROSITE" id="PS51471">
    <property type="entry name" value="FE2OG_OXY"/>
    <property type="match status" value="1"/>
</dbReference>
<organism>
    <name type="scientific">Nitrosomonas eutropha (strain DSM 101675 / C91 / Nm57)</name>
    <dbReference type="NCBI Taxonomy" id="335283"/>
    <lineage>
        <taxon>Bacteria</taxon>
        <taxon>Pseudomonadati</taxon>
        <taxon>Pseudomonadota</taxon>
        <taxon>Betaproteobacteria</taxon>
        <taxon>Nitrosomonadales</taxon>
        <taxon>Nitrosomonadaceae</taxon>
        <taxon>Nitrosomonas</taxon>
    </lineage>
</organism>
<feature type="chain" id="PRO_1000061723" description="PKHD-type hydroxylase Neut_0373">
    <location>
        <begin position="1"/>
        <end position="227"/>
    </location>
</feature>
<feature type="domain" description="Fe2OG dioxygenase" evidence="1">
    <location>
        <begin position="78"/>
        <end position="179"/>
    </location>
</feature>
<feature type="binding site" evidence="1">
    <location>
        <position position="97"/>
    </location>
    <ligand>
        <name>Fe cation</name>
        <dbReference type="ChEBI" id="CHEBI:24875"/>
    </ligand>
</feature>
<feature type="binding site" evidence="1">
    <location>
        <position position="99"/>
    </location>
    <ligand>
        <name>Fe cation</name>
        <dbReference type="ChEBI" id="CHEBI:24875"/>
    </ligand>
</feature>
<feature type="binding site" evidence="1">
    <location>
        <position position="160"/>
    </location>
    <ligand>
        <name>Fe cation</name>
        <dbReference type="ChEBI" id="CHEBI:24875"/>
    </ligand>
</feature>
<feature type="binding site" evidence="1">
    <location>
        <position position="170"/>
    </location>
    <ligand>
        <name>2-oxoglutarate</name>
        <dbReference type="ChEBI" id="CHEBI:16810"/>
    </ligand>
</feature>